<reference key="1">
    <citation type="submission" date="2006-11" db="EMBL/GenBank/DDBJ databases">
        <title>Identification and characterization of a new conjugation/ type IVA secretion system (trb/tra) of L. pneumophila Corby localized on a mobile genomic island.</title>
        <authorList>
            <person name="Gloeckner G."/>
            <person name="Albert-Weissenberger C."/>
            <person name="Weinmann E."/>
            <person name="Jacobi S."/>
            <person name="Schunder E."/>
            <person name="Steinert M."/>
            <person name="Buchrieser C."/>
            <person name="Hacker J."/>
            <person name="Heuner K."/>
        </authorList>
    </citation>
    <scope>NUCLEOTIDE SEQUENCE [LARGE SCALE GENOMIC DNA]</scope>
    <source>
        <strain>Corby</strain>
    </source>
</reference>
<comment type="function">
    <text evidence="1">Catalyzes the attachment of alanine to tRNA(Ala) in a two-step reaction: alanine is first activated by ATP to form Ala-AMP and then transferred to the acceptor end of tRNA(Ala). Also edits incorrectly charged Ser-tRNA(Ala) and Gly-tRNA(Ala) via its editing domain.</text>
</comment>
<comment type="catalytic activity">
    <reaction evidence="1">
        <text>tRNA(Ala) + L-alanine + ATP = L-alanyl-tRNA(Ala) + AMP + diphosphate</text>
        <dbReference type="Rhea" id="RHEA:12540"/>
        <dbReference type="Rhea" id="RHEA-COMP:9657"/>
        <dbReference type="Rhea" id="RHEA-COMP:9923"/>
        <dbReference type="ChEBI" id="CHEBI:30616"/>
        <dbReference type="ChEBI" id="CHEBI:33019"/>
        <dbReference type="ChEBI" id="CHEBI:57972"/>
        <dbReference type="ChEBI" id="CHEBI:78442"/>
        <dbReference type="ChEBI" id="CHEBI:78497"/>
        <dbReference type="ChEBI" id="CHEBI:456215"/>
        <dbReference type="EC" id="6.1.1.7"/>
    </reaction>
</comment>
<comment type="cofactor">
    <cofactor evidence="1">
        <name>Zn(2+)</name>
        <dbReference type="ChEBI" id="CHEBI:29105"/>
    </cofactor>
    <text evidence="1">Binds 1 zinc ion per subunit.</text>
</comment>
<comment type="subcellular location">
    <subcellularLocation>
        <location evidence="1">Cytoplasm</location>
    </subcellularLocation>
</comment>
<comment type="domain">
    <text evidence="1">Consists of three domains; the N-terminal catalytic domain, the editing domain and the C-terminal C-Ala domain. The editing domain removes incorrectly charged amino acids, while the C-Ala domain, along with tRNA(Ala), serves as a bridge to cooperatively bring together the editing and aminoacylation centers thus stimulating deacylation of misacylated tRNAs.</text>
</comment>
<comment type="similarity">
    <text evidence="1">Belongs to the class-II aminoacyl-tRNA synthetase family.</text>
</comment>
<proteinExistence type="inferred from homology"/>
<dbReference type="EC" id="6.1.1.7" evidence="1"/>
<dbReference type="EMBL" id="CP000675">
    <property type="protein sequence ID" value="ABQ55206.1"/>
    <property type="molecule type" value="Genomic_DNA"/>
</dbReference>
<dbReference type="RefSeq" id="WP_010947525.1">
    <property type="nucleotide sequence ID" value="NZ_JAPMSS010000005.1"/>
</dbReference>
<dbReference type="SMR" id="A5ICV6"/>
<dbReference type="GeneID" id="57035791"/>
<dbReference type="KEGG" id="lpc:LPC_1243"/>
<dbReference type="HOGENOM" id="CLU_004485_1_1_6"/>
<dbReference type="GO" id="GO:0005829">
    <property type="term" value="C:cytosol"/>
    <property type="evidence" value="ECO:0007669"/>
    <property type="project" value="TreeGrafter"/>
</dbReference>
<dbReference type="GO" id="GO:0004813">
    <property type="term" value="F:alanine-tRNA ligase activity"/>
    <property type="evidence" value="ECO:0007669"/>
    <property type="project" value="UniProtKB-UniRule"/>
</dbReference>
<dbReference type="GO" id="GO:0002161">
    <property type="term" value="F:aminoacyl-tRNA deacylase activity"/>
    <property type="evidence" value="ECO:0007669"/>
    <property type="project" value="TreeGrafter"/>
</dbReference>
<dbReference type="GO" id="GO:0005524">
    <property type="term" value="F:ATP binding"/>
    <property type="evidence" value="ECO:0007669"/>
    <property type="project" value="UniProtKB-UniRule"/>
</dbReference>
<dbReference type="GO" id="GO:0000049">
    <property type="term" value="F:tRNA binding"/>
    <property type="evidence" value="ECO:0007669"/>
    <property type="project" value="UniProtKB-KW"/>
</dbReference>
<dbReference type="GO" id="GO:0008270">
    <property type="term" value="F:zinc ion binding"/>
    <property type="evidence" value="ECO:0007669"/>
    <property type="project" value="UniProtKB-UniRule"/>
</dbReference>
<dbReference type="GO" id="GO:0006419">
    <property type="term" value="P:alanyl-tRNA aminoacylation"/>
    <property type="evidence" value="ECO:0007669"/>
    <property type="project" value="UniProtKB-UniRule"/>
</dbReference>
<dbReference type="GO" id="GO:0045892">
    <property type="term" value="P:negative regulation of DNA-templated transcription"/>
    <property type="evidence" value="ECO:0007669"/>
    <property type="project" value="TreeGrafter"/>
</dbReference>
<dbReference type="CDD" id="cd00673">
    <property type="entry name" value="AlaRS_core"/>
    <property type="match status" value="1"/>
</dbReference>
<dbReference type="FunFam" id="2.40.30.130:FF:000001">
    <property type="entry name" value="Alanine--tRNA ligase"/>
    <property type="match status" value="1"/>
</dbReference>
<dbReference type="FunFam" id="3.10.310.40:FF:000001">
    <property type="entry name" value="Alanine--tRNA ligase"/>
    <property type="match status" value="1"/>
</dbReference>
<dbReference type="FunFam" id="3.30.54.20:FF:000001">
    <property type="entry name" value="Alanine--tRNA ligase"/>
    <property type="match status" value="1"/>
</dbReference>
<dbReference type="FunFam" id="3.30.930.10:FF:000004">
    <property type="entry name" value="Alanine--tRNA ligase"/>
    <property type="match status" value="1"/>
</dbReference>
<dbReference type="FunFam" id="3.30.980.10:FF:000004">
    <property type="entry name" value="Alanine--tRNA ligase, cytoplasmic"/>
    <property type="match status" value="1"/>
</dbReference>
<dbReference type="Gene3D" id="2.40.30.130">
    <property type="match status" value="1"/>
</dbReference>
<dbReference type="Gene3D" id="3.10.310.40">
    <property type="match status" value="1"/>
</dbReference>
<dbReference type="Gene3D" id="3.30.54.20">
    <property type="match status" value="1"/>
</dbReference>
<dbReference type="Gene3D" id="6.10.250.550">
    <property type="match status" value="1"/>
</dbReference>
<dbReference type="Gene3D" id="3.30.930.10">
    <property type="entry name" value="Bira Bifunctional Protein, Domain 2"/>
    <property type="match status" value="1"/>
</dbReference>
<dbReference type="Gene3D" id="3.30.980.10">
    <property type="entry name" value="Threonyl-trna Synthetase, Chain A, domain 2"/>
    <property type="match status" value="1"/>
</dbReference>
<dbReference type="HAMAP" id="MF_00036_B">
    <property type="entry name" value="Ala_tRNA_synth_B"/>
    <property type="match status" value="1"/>
</dbReference>
<dbReference type="InterPro" id="IPR045864">
    <property type="entry name" value="aa-tRNA-synth_II/BPL/LPL"/>
</dbReference>
<dbReference type="InterPro" id="IPR002318">
    <property type="entry name" value="Ala-tRNA-lgiase_IIc"/>
</dbReference>
<dbReference type="InterPro" id="IPR018162">
    <property type="entry name" value="Ala-tRNA-ligase_IIc_anticod-bd"/>
</dbReference>
<dbReference type="InterPro" id="IPR018165">
    <property type="entry name" value="Ala-tRNA-synth_IIc_core"/>
</dbReference>
<dbReference type="InterPro" id="IPR018164">
    <property type="entry name" value="Ala-tRNA-synth_IIc_N"/>
</dbReference>
<dbReference type="InterPro" id="IPR050058">
    <property type="entry name" value="Ala-tRNA_ligase"/>
</dbReference>
<dbReference type="InterPro" id="IPR023033">
    <property type="entry name" value="Ala_tRNA_ligase_euk/bac"/>
</dbReference>
<dbReference type="InterPro" id="IPR003156">
    <property type="entry name" value="DHHA1_dom"/>
</dbReference>
<dbReference type="InterPro" id="IPR018163">
    <property type="entry name" value="Thr/Ala-tRNA-synth_IIc_edit"/>
</dbReference>
<dbReference type="InterPro" id="IPR009000">
    <property type="entry name" value="Transl_B-barrel_sf"/>
</dbReference>
<dbReference type="InterPro" id="IPR012947">
    <property type="entry name" value="tRNA_SAD"/>
</dbReference>
<dbReference type="NCBIfam" id="TIGR00344">
    <property type="entry name" value="alaS"/>
    <property type="match status" value="1"/>
</dbReference>
<dbReference type="PANTHER" id="PTHR11777:SF9">
    <property type="entry name" value="ALANINE--TRNA LIGASE, CYTOPLASMIC"/>
    <property type="match status" value="1"/>
</dbReference>
<dbReference type="PANTHER" id="PTHR11777">
    <property type="entry name" value="ALANYL-TRNA SYNTHETASE"/>
    <property type="match status" value="1"/>
</dbReference>
<dbReference type="Pfam" id="PF02272">
    <property type="entry name" value="DHHA1"/>
    <property type="match status" value="1"/>
</dbReference>
<dbReference type="Pfam" id="PF01411">
    <property type="entry name" value="tRNA-synt_2c"/>
    <property type="match status" value="1"/>
</dbReference>
<dbReference type="Pfam" id="PF07973">
    <property type="entry name" value="tRNA_SAD"/>
    <property type="match status" value="1"/>
</dbReference>
<dbReference type="PRINTS" id="PR00980">
    <property type="entry name" value="TRNASYNTHALA"/>
</dbReference>
<dbReference type="SMART" id="SM00863">
    <property type="entry name" value="tRNA_SAD"/>
    <property type="match status" value="1"/>
</dbReference>
<dbReference type="SUPFAM" id="SSF55681">
    <property type="entry name" value="Class II aaRS and biotin synthetases"/>
    <property type="match status" value="1"/>
</dbReference>
<dbReference type="SUPFAM" id="SSF101353">
    <property type="entry name" value="Putative anticodon-binding domain of alanyl-tRNA synthetase (AlaRS)"/>
    <property type="match status" value="1"/>
</dbReference>
<dbReference type="SUPFAM" id="SSF55186">
    <property type="entry name" value="ThrRS/AlaRS common domain"/>
    <property type="match status" value="1"/>
</dbReference>
<dbReference type="SUPFAM" id="SSF50447">
    <property type="entry name" value="Translation proteins"/>
    <property type="match status" value="1"/>
</dbReference>
<dbReference type="PROSITE" id="PS50860">
    <property type="entry name" value="AA_TRNA_LIGASE_II_ALA"/>
    <property type="match status" value="1"/>
</dbReference>
<protein>
    <recommendedName>
        <fullName evidence="1">Alanine--tRNA ligase</fullName>
        <ecNumber evidence="1">6.1.1.7</ecNumber>
    </recommendedName>
    <alternativeName>
        <fullName evidence="1">Alanyl-tRNA synthetase</fullName>
        <shortName evidence="1">AlaRS</shortName>
    </alternativeName>
</protein>
<feature type="chain" id="PRO_0000347654" description="Alanine--tRNA ligase">
    <location>
        <begin position="1"/>
        <end position="860"/>
    </location>
</feature>
<feature type="binding site" evidence="1">
    <location>
        <position position="553"/>
    </location>
    <ligand>
        <name>Zn(2+)</name>
        <dbReference type="ChEBI" id="CHEBI:29105"/>
    </ligand>
</feature>
<feature type="binding site" evidence="1">
    <location>
        <position position="557"/>
    </location>
    <ligand>
        <name>Zn(2+)</name>
        <dbReference type="ChEBI" id="CHEBI:29105"/>
    </ligand>
</feature>
<feature type="binding site" evidence="1">
    <location>
        <position position="655"/>
    </location>
    <ligand>
        <name>Zn(2+)</name>
        <dbReference type="ChEBI" id="CHEBI:29105"/>
    </ligand>
</feature>
<feature type="binding site" evidence="1">
    <location>
        <position position="659"/>
    </location>
    <ligand>
        <name>Zn(2+)</name>
        <dbReference type="ChEBI" id="CHEBI:29105"/>
    </ligand>
</feature>
<evidence type="ECO:0000255" key="1">
    <source>
        <dbReference type="HAMAP-Rule" id="MF_00036"/>
    </source>
</evidence>
<gene>
    <name evidence="1" type="primary">alaS</name>
    <name type="ordered locus">LPC_1243</name>
</gene>
<accession>A5ICV6</accession>
<sequence>MKSSEIRQAFLNYFVQRGHQIVASSSLVPSNDPTLLFTNAGMVQFKDLFLGLETRSYQRAATAQRCVRAGGKHNDLENVGYTARHHTFFEMLGNFSFGDYFKREAIQYAWEFLTEVLHIPAERLWVTVYKEDLEAEDIWLKEMKVSPERFSRCGEKDNFWSMGDTGPCGPCTEIFYDHGPEVAGGPPGSPDEDGDRYIEIWNLVFMQFNRDREGHLHPLPKPSVDTGMGLERLAAVIQGVHSNYEIDSFQYLIKAIAQLGQDIDLNHTSLKVIADHIRSCSFLIVDGVLPSNEGRGYVLRRIIRRAVRHGNKLGLPSPFFSKLVQPLIDVMGDAYPELINSKAHIERILQQEENQFTRTLEQGLRLLQDHIKNLQGQELSGEVAFKLYDTYGFPIDLTADIIREQGLHIDMEAFNQLMQQQREQSQAASQFTTDYHAVSQLDHQSEFHGYEKESMEAKIIGLLQEGNEVKSINKGAKGAVILDHTPFYAESGGQVGDKGLLIGKEFTFQVDDTQKVGQAVVHYGKVIKGELTLDLLIHAQVDNIRRDAIRLNHTATHLLHAALKKIVGQHVQQRGSLVDAERARFDFSHFEALTPQQIQQIEEVVNAQIRANNEVITQVMDIESAKQSGAVALFGEKYSDAVRVLSMGDFSKELCGGTHARRTGDIGLFKIVAEYGIASGIRRIEMVTGRYALAWVNEQLGFMNNLAATLKTTPNSLQEKVSQLLLDNKNQEKMIAKLLSEKAQKSGADILGEIEEIKGINLLIKQLEGMDSQTMRHTMDQLKSRIDSAVIILFTIEQNKMNVIAGVSKNIIGKAPSAAQLVRHLCGKGGGRDDMAQGGGGVPEDLNSKIKEIKEMIEKI</sequence>
<organism>
    <name type="scientific">Legionella pneumophila (strain Corby)</name>
    <dbReference type="NCBI Taxonomy" id="400673"/>
    <lineage>
        <taxon>Bacteria</taxon>
        <taxon>Pseudomonadati</taxon>
        <taxon>Pseudomonadota</taxon>
        <taxon>Gammaproteobacteria</taxon>
        <taxon>Legionellales</taxon>
        <taxon>Legionellaceae</taxon>
        <taxon>Legionella</taxon>
    </lineage>
</organism>
<name>SYA_LEGPC</name>
<keyword id="KW-0030">Aminoacyl-tRNA synthetase</keyword>
<keyword id="KW-0067">ATP-binding</keyword>
<keyword id="KW-0963">Cytoplasm</keyword>
<keyword id="KW-0436">Ligase</keyword>
<keyword id="KW-0479">Metal-binding</keyword>
<keyword id="KW-0547">Nucleotide-binding</keyword>
<keyword id="KW-0648">Protein biosynthesis</keyword>
<keyword id="KW-0694">RNA-binding</keyword>
<keyword id="KW-0820">tRNA-binding</keyword>
<keyword id="KW-0862">Zinc</keyword>